<proteinExistence type="inferred from homology"/>
<comment type="function">
    <text evidence="1">DNA-dependent RNA polymerase catalyzes the transcription of DNA into RNA using the four ribonucleoside triphosphates as substrates.</text>
</comment>
<comment type="catalytic activity">
    <reaction evidence="1">
        <text>RNA(n) + a ribonucleoside 5'-triphosphate = RNA(n+1) + diphosphate</text>
        <dbReference type="Rhea" id="RHEA:21248"/>
        <dbReference type="Rhea" id="RHEA-COMP:14527"/>
        <dbReference type="Rhea" id="RHEA-COMP:17342"/>
        <dbReference type="ChEBI" id="CHEBI:33019"/>
        <dbReference type="ChEBI" id="CHEBI:61557"/>
        <dbReference type="ChEBI" id="CHEBI:140395"/>
        <dbReference type="EC" id="2.7.7.6"/>
    </reaction>
</comment>
<comment type="subunit">
    <text evidence="1">Homodimer. The RNAP catalytic core consists of 2 alpha, 1 beta, 1 beta' and 1 omega subunit. When a sigma factor is associated with the core the holoenzyme is formed, which can initiate transcription.</text>
</comment>
<comment type="domain">
    <text evidence="1">The N-terminal domain is essential for RNAP assembly and basal transcription, whereas the C-terminal domain is involved in interaction with transcriptional regulators and with upstream promoter elements.</text>
</comment>
<comment type="similarity">
    <text evidence="1">Belongs to the RNA polymerase alpha chain family.</text>
</comment>
<reference key="1">
    <citation type="journal article" date="2003" name="Appl. Microbiol. Biotechnol.">
        <title>The Corynebacterium glutamicum genome: features and impacts on biotechnological processes.</title>
        <authorList>
            <person name="Ikeda M."/>
            <person name="Nakagawa S."/>
        </authorList>
    </citation>
    <scope>NUCLEOTIDE SEQUENCE [LARGE SCALE GENOMIC DNA]</scope>
    <source>
        <strain>ATCC 13032 / DSM 20300 / JCM 1318 / BCRC 11384 / CCUG 27702 / LMG 3730 / NBRC 12168 / NCIMB 10025 / NRRL B-2784 / 534</strain>
    </source>
</reference>
<reference key="2">
    <citation type="journal article" date="2003" name="J. Biotechnol.">
        <title>The complete Corynebacterium glutamicum ATCC 13032 genome sequence and its impact on the production of L-aspartate-derived amino acids and vitamins.</title>
        <authorList>
            <person name="Kalinowski J."/>
            <person name="Bathe B."/>
            <person name="Bartels D."/>
            <person name="Bischoff N."/>
            <person name="Bott M."/>
            <person name="Burkovski A."/>
            <person name="Dusch N."/>
            <person name="Eggeling L."/>
            <person name="Eikmanns B.J."/>
            <person name="Gaigalat L."/>
            <person name="Goesmann A."/>
            <person name="Hartmann M."/>
            <person name="Huthmacher K."/>
            <person name="Kraemer R."/>
            <person name="Linke B."/>
            <person name="McHardy A.C."/>
            <person name="Meyer F."/>
            <person name="Moeckel B."/>
            <person name="Pfefferle W."/>
            <person name="Puehler A."/>
            <person name="Rey D.A."/>
            <person name="Rueckert C."/>
            <person name="Rupp O."/>
            <person name="Sahm H."/>
            <person name="Wendisch V.F."/>
            <person name="Wiegraebe I."/>
            <person name="Tauch A."/>
        </authorList>
    </citation>
    <scope>NUCLEOTIDE SEQUENCE [LARGE SCALE GENOMIC DNA]</scope>
    <source>
        <strain>ATCC 13032 / DSM 20300 / JCM 1318 / BCRC 11384 / CCUG 27702 / LMG 3730 / NBRC 12168 / NCIMB 10025 / NRRL B-2784 / 534</strain>
    </source>
</reference>
<dbReference type="EC" id="2.7.7.6" evidence="1"/>
<dbReference type="EMBL" id="BA000036">
    <property type="protein sequence ID" value="BAB97958.1"/>
    <property type="molecule type" value="Genomic_DNA"/>
</dbReference>
<dbReference type="EMBL" id="BX927149">
    <property type="protein sequence ID" value="CAF19270.1"/>
    <property type="molecule type" value="Genomic_DNA"/>
</dbReference>
<dbReference type="RefSeq" id="NP_599801.1">
    <property type="nucleotide sequence ID" value="NC_003450.3"/>
</dbReference>
<dbReference type="RefSeq" id="WP_011013731.1">
    <property type="nucleotide sequence ID" value="NC_006958.1"/>
</dbReference>
<dbReference type="SMR" id="Q8NSV2"/>
<dbReference type="STRING" id="196627.cg0655"/>
<dbReference type="KEGG" id="cgb:cg0655"/>
<dbReference type="KEGG" id="cgl:Cgl0564"/>
<dbReference type="PATRIC" id="fig|196627.13.peg.556"/>
<dbReference type="eggNOG" id="COG0202">
    <property type="taxonomic scope" value="Bacteria"/>
</dbReference>
<dbReference type="HOGENOM" id="CLU_053084_0_1_11"/>
<dbReference type="OrthoDB" id="9805706at2"/>
<dbReference type="BioCyc" id="CORYNE:G18NG-10127-MONOMER"/>
<dbReference type="Proteomes" id="UP000000582">
    <property type="component" value="Chromosome"/>
</dbReference>
<dbReference type="Proteomes" id="UP000001009">
    <property type="component" value="Chromosome"/>
</dbReference>
<dbReference type="GO" id="GO:0005737">
    <property type="term" value="C:cytoplasm"/>
    <property type="evidence" value="ECO:0007669"/>
    <property type="project" value="UniProtKB-ARBA"/>
</dbReference>
<dbReference type="GO" id="GO:0000428">
    <property type="term" value="C:DNA-directed RNA polymerase complex"/>
    <property type="evidence" value="ECO:0007669"/>
    <property type="project" value="UniProtKB-KW"/>
</dbReference>
<dbReference type="GO" id="GO:0003677">
    <property type="term" value="F:DNA binding"/>
    <property type="evidence" value="ECO:0007669"/>
    <property type="project" value="UniProtKB-UniRule"/>
</dbReference>
<dbReference type="GO" id="GO:0003899">
    <property type="term" value="F:DNA-directed RNA polymerase activity"/>
    <property type="evidence" value="ECO:0007669"/>
    <property type="project" value="UniProtKB-UniRule"/>
</dbReference>
<dbReference type="GO" id="GO:0046983">
    <property type="term" value="F:protein dimerization activity"/>
    <property type="evidence" value="ECO:0007669"/>
    <property type="project" value="InterPro"/>
</dbReference>
<dbReference type="GO" id="GO:0006351">
    <property type="term" value="P:DNA-templated transcription"/>
    <property type="evidence" value="ECO:0007669"/>
    <property type="project" value="UniProtKB-UniRule"/>
</dbReference>
<dbReference type="CDD" id="cd06928">
    <property type="entry name" value="RNAP_alpha_NTD"/>
    <property type="match status" value="1"/>
</dbReference>
<dbReference type="FunFam" id="1.10.150.20:FF:000001">
    <property type="entry name" value="DNA-directed RNA polymerase subunit alpha"/>
    <property type="match status" value="1"/>
</dbReference>
<dbReference type="FunFam" id="2.170.120.12:FF:000001">
    <property type="entry name" value="DNA-directed RNA polymerase subunit alpha"/>
    <property type="match status" value="1"/>
</dbReference>
<dbReference type="Gene3D" id="1.10.150.20">
    <property type="entry name" value="5' to 3' exonuclease, C-terminal subdomain"/>
    <property type="match status" value="1"/>
</dbReference>
<dbReference type="Gene3D" id="2.170.120.12">
    <property type="entry name" value="DNA-directed RNA polymerase, insert domain"/>
    <property type="match status" value="1"/>
</dbReference>
<dbReference type="Gene3D" id="3.30.1360.10">
    <property type="entry name" value="RNA polymerase, RBP11-like subunit"/>
    <property type="match status" value="1"/>
</dbReference>
<dbReference type="HAMAP" id="MF_00059">
    <property type="entry name" value="RNApol_bact_RpoA"/>
    <property type="match status" value="1"/>
</dbReference>
<dbReference type="InterPro" id="IPR011262">
    <property type="entry name" value="DNA-dir_RNA_pol_insert"/>
</dbReference>
<dbReference type="InterPro" id="IPR011263">
    <property type="entry name" value="DNA-dir_RNA_pol_RpoA/D/Rpb3"/>
</dbReference>
<dbReference type="InterPro" id="IPR011773">
    <property type="entry name" value="DNA-dir_RpoA"/>
</dbReference>
<dbReference type="InterPro" id="IPR036603">
    <property type="entry name" value="RBP11-like"/>
</dbReference>
<dbReference type="InterPro" id="IPR011260">
    <property type="entry name" value="RNAP_asu_C"/>
</dbReference>
<dbReference type="InterPro" id="IPR036643">
    <property type="entry name" value="RNApol_insert_sf"/>
</dbReference>
<dbReference type="NCBIfam" id="NF003513">
    <property type="entry name" value="PRK05182.1-2"/>
    <property type="match status" value="1"/>
</dbReference>
<dbReference type="NCBIfam" id="NF003514">
    <property type="entry name" value="PRK05182.1-4"/>
    <property type="match status" value="1"/>
</dbReference>
<dbReference type="NCBIfam" id="NF003519">
    <property type="entry name" value="PRK05182.2-5"/>
    <property type="match status" value="1"/>
</dbReference>
<dbReference type="NCBIfam" id="TIGR02027">
    <property type="entry name" value="rpoA"/>
    <property type="match status" value="1"/>
</dbReference>
<dbReference type="Pfam" id="PF01000">
    <property type="entry name" value="RNA_pol_A_bac"/>
    <property type="match status" value="1"/>
</dbReference>
<dbReference type="Pfam" id="PF03118">
    <property type="entry name" value="RNA_pol_A_CTD"/>
    <property type="match status" value="1"/>
</dbReference>
<dbReference type="Pfam" id="PF01193">
    <property type="entry name" value="RNA_pol_L"/>
    <property type="match status" value="1"/>
</dbReference>
<dbReference type="SMART" id="SM00662">
    <property type="entry name" value="RPOLD"/>
    <property type="match status" value="1"/>
</dbReference>
<dbReference type="SUPFAM" id="SSF47789">
    <property type="entry name" value="C-terminal domain of RNA polymerase alpha subunit"/>
    <property type="match status" value="1"/>
</dbReference>
<dbReference type="SUPFAM" id="SSF56553">
    <property type="entry name" value="Insert subdomain of RNA polymerase alpha subunit"/>
    <property type="match status" value="1"/>
</dbReference>
<dbReference type="SUPFAM" id="SSF55257">
    <property type="entry name" value="RBP11-like subunits of RNA polymerase"/>
    <property type="match status" value="1"/>
</dbReference>
<gene>
    <name evidence="1" type="primary">rpoA</name>
    <name type="ordered locus">Cgl0564</name>
    <name type="ordered locus">cg0655</name>
</gene>
<keyword id="KW-0240">DNA-directed RNA polymerase</keyword>
<keyword id="KW-0548">Nucleotidyltransferase</keyword>
<keyword id="KW-1185">Reference proteome</keyword>
<keyword id="KW-0804">Transcription</keyword>
<keyword id="KW-0808">Transferase</keyword>
<accession>Q8NSV2</accession>
<feature type="chain" id="PRO_0000175299" description="DNA-directed RNA polymerase subunit alpha">
    <location>
        <begin position="1"/>
        <end position="338"/>
    </location>
</feature>
<feature type="region of interest" description="Alpha N-terminal domain (alpha-NTD)" evidence="1">
    <location>
        <begin position="1"/>
        <end position="225"/>
    </location>
</feature>
<feature type="region of interest" description="Alpha C-terminal domain (alpha-CTD)" evidence="1">
    <location>
        <begin position="242"/>
        <end position="338"/>
    </location>
</feature>
<feature type="region of interest" description="Disordered" evidence="2">
    <location>
        <begin position="319"/>
        <end position="338"/>
    </location>
</feature>
<sequence length="338" mass="36670">MLISQRPTITEEFVNNARSRFVIEPLEPGFGYTLGNSLRRTLLSSIPGAAVTSVKIDGVLHEFTTISGVKEDVSDIILNIKGLVLSSDSDEPVVMQLVKEGPGVVTAGDIQPPAGVEIHNPDLHIATLNETAKIEIELIVERGRGYVPATVTATGGEIGRIPVDQIYSPVLKVSYKVEATRVEQRTDFDKLVIDVETKNSITARDALASAGKTLVELFGLARELNIAAEGIEIGPSPQETEYIAAYSMPIEDLDFSVRSYNCLKREDIHTVGELAERAESDLLDIRNFGQKSINEVKIKLAGLGLTLKDAPEDFDPSTLEGYDAETGGYIDVEAEDSE</sequence>
<name>RPOA_CORGL</name>
<organism>
    <name type="scientific">Corynebacterium glutamicum (strain ATCC 13032 / DSM 20300 / JCM 1318 / BCRC 11384 / CCUG 27702 / LMG 3730 / NBRC 12168 / NCIMB 10025 / NRRL B-2784 / 534)</name>
    <dbReference type="NCBI Taxonomy" id="196627"/>
    <lineage>
        <taxon>Bacteria</taxon>
        <taxon>Bacillati</taxon>
        <taxon>Actinomycetota</taxon>
        <taxon>Actinomycetes</taxon>
        <taxon>Mycobacteriales</taxon>
        <taxon>Corynebacteriaceae</taxon>
        <taxon>Corynebacterium</taxon>
    </lineage>
</organism>
<evidence type="ECO:0000255" key="1">
    <source>
        <dbReference type="HAMAP-Rule" id="MF_00059"/>
    </source>
</evidence>
<evidence type="ECO:0000256" key="2">
    <source>
        <dbReference type="SAM" id="MobiDB-lite"/>
    </source>
</evidence>
<protein>
    <recommendedName>
        <fullName evidence="1">DNA-directed RNA polymerase subunit alpha</fullName>
        <shortName evidence="1">RNAP subunit alpha</shortName>
        <ecNumber evidence="1">2.7.7.6</ecNumber>
    </recommendedName>
    <alternativeName>
        <fullName evidence="1">RNA polymerase subunit alpha</fullName>
    </alternativeName>
    <alternativeName>
        <fullName evidence="1">Transcriptase subunit alpha</fullName>
    </alternativeName>
</protein>